<accession>Q8C262</accession>
<sequence length="412" mass="45145">MATSRLPAVPEETTILMAKEELEALRTAFESGDIPQAASRLRELLANSETTRLEVGVTGESGAGKSSLINALRGLGAEDPGAALTGVVETTMQPSPYPHPQFPDVTLWDLPGAGSPGCSADKYLKQVDFGRYDFFLLVSPRRCGAVELPPSLLRSCARGRSFTLCAPRWTRIWRPPAARGPRVSARLQLLQEIRDHCTERLRVAGVNDPRIFLVSNLSPTRYDFPMLVTTWEHDLPAHRRHAGLLSLPDISLEALQKKKDMLQEQVLKTALVSGVIQALPVPGLAAAYDDALLIRSLRGYHRSFGLDDDSLAKLAEQVGKQAGDLRSVIRSPLANEVSPETVLRLYSQSSDGAMRVARAFERGIPVSARWWPGVSASARSTPCSRAVSMRWLRTPNASASKPWRKMSPRGVR</sequence>
<organism>
    <name type="scientific">Mus musculus</name>
    <name type="common">Mouse</name>
    <dbReference type="NCBI Taxonomy" id="10090"/>
    <lineage>
        <taxon>Eukaryota</taxon>
        <taxon>Metazoa</taxon>
        <taxon>Chordata</taxon>
        <taxon>Craniata</taxon>
        <taxon>Vertebrata</taxon>
        <taxon>Euteleostomi</taxon>
        <taxon>Mammalia</taxon>
        <taxon>Eutheria</taxon>
        <taxon>Euarchontoglires</taxon>
        <taxon>Glires</taxon>
        <taxon>Rodentia</taxon>
        <taxon>Myomorpha</taxon>
        <taxon>Muroidea</taxon>
        <taxon>Muridae</taxon>
        <taxon>Murinae</taxon>
        <taxon>Mus</taxon>
        <taxon>Mus</taxon>
    </lineage>
</organism>
<name>IIGP5_MOUSE</name>
<protein>
    <recommendedName>
        <fullName>Interferon-inducible GTPase 5</fullName>
        <ecNumber>3.6.5.-</ecNumber>
    </recommendedName>
    <alternativeName>
        <fullName evidence="8">Immunity-related GTPase cinema 1</fullName>
    </alternativeName>
</protein>
<comment type="function">
    <text evidence="4">Required for sperm motility and therefore male fertility, via positive regulation of spermatozoa fibrous sheath formation.</text>
</comment>
<comment type="catalytic activity">
    <reaction>
        <text>GTP + H2O = GDP + phosphate + H(+)</text>
        <dbReference type="Rhea" id="RHEA:19669"/>
        <dbReference type="ChEBI" id="CHEBI:15377"/>
        <dbReference type="ChEBI" id="CHEBI:15378"/>
        <dbReference type="ChEBI" id="CHEBI:37565"/>
        <dbReference type="ChEBI" id="CHEBI:43474"/>
        <dbReference type="ChEBI" id="CHEBI:58189"/>
    </reaction>
</comment>
<comment type="subunit">
    <text evidence="5">Interacts with PLIN2/ADRP and COX4I1/COXIV.</text>
</comment>
<comment type="subcellular location">
    <subcellularLocation>
        <location evidence="5">Cell projection</location>
        <location evidence="5">Cilium</location>
        <location evidence="5">Flagellum</location>
    </subcellularLocation>
    <subcellularLocation>
        <location evidence="5">Lipid droplet</location>
    </subcellularLocation>
    <text evidence="5">Expressed in the sperm mitochondrial sheath.</text>
</comment>
<comment type="tissue specificity">
    <text evidence="4 5">Expressed in spermatozoa tails from the testis and epididymis, where it may be a component of the fibrous sheath (at protein level).</text>
</comment>
<comment type="developmental stage">
    <text evidence="4 5">Expressed in the testis from 35 days of age until 90 days of age (at protein level) (PubMed:37195149). mRNA is initially detected at three weeks of age, with expression increasing to five weeks of age (PubMed:35618043).</text>
</comment>
<comment type="disruption phenotype">
    <text evidence="4">Knockout mice show no overt abnormalities, however male mice show reduced fertility (PubMed:35618043). Reduced length of spermatozoa tails and significantly lower motility (PubMed:35618043). Reduced ability to penetrate the zona pellucida likely due to impaired sperm motility (PubMed:35618043). Spermatozoa show disorganized fibrous sheath, loss of thickening of the longitudinal columns adjacent to doublet microtubules 3 and 8, additionally ribs that circumferentially connect longitudinal columns are torn, this phenotype is first evident in step 16 spermatids (PubMed:35618043). Abnormal increase of microtubule doublets in both the midpiece and principal piece of the spermatozoa (PubMed:35618043).</text>
</comment>
<comment type="similarity">
    <text evidence="3 7">Belongs to the TRAFAC class dynamin-like GTPase superfamily. IRG family.</text>
</comment>
<evidence type="ECO:0000250" key="1"/>
<evidence type="ECO:0000250" key="2">
    <source>
        <dbReference type="UniProtKB" id="Q6AYF9"/>
    </source>
</evidence>
<evidence type="ECO:0000255" key="3">
    <source>
        <dbReference type="PROSITE-ProRule" id="PRU01053"/>
    </source>
</evidence>
<evidence type="ECO:0000269" key="4">
    <source>
    </source>
</evidence>
<evidence type="ECO:0000269" key="5">
    <source>
    </source>
</evidence>
<evidence type="ECO:0000303" key="6">
    <source>
    </source>
</evidence>
<evidence type="ECO:0000305" key="7"/>
<evidence type="ECO:0000312" key="8">
    <source>
        <dbReference type="MGI" id="MGI:2685948"/>
    </source>
</evidence>
<keyword id="KW-0966">Cell projection</keyword>
<keyword id="KW-0969">Cilium</keyword>
<keyword id="KW-0282">Flagellum</keyword>
<keyword id="KW-0342">GTP-binding</keyword>
<keyword id="KW-0378">Hydrolase</keyword>
<keyword id="KW-0551">Lipid droplet</keyword>
<keyword id="KW-0547">Nucleotide-binding</keyword>
<keyword id="KW-0597">Phosphoprotein</keyword>
<keyword id="KW-1185">Reference proteome</keyword>
<reference key="1">
    <citation type="journal article" date="2005" name="Science">
        <title>The transcriptional landscape of the mammalian genome.</title>
        <authorList>
            <person name="Carninci P."/>
            <person name="Kasukawa T."/>
            <person name="Katayama S."/>
            <person name="Gough J."/>
            <person name="Frith M.C."/>
            <person name="Maeda N."/>
            <person name="Oyama R."/>
            <person name="Ravasi T."/>
            <person name="Lenhard B."/>
            <person name="Wells C."/>
            <person name="Kodzius R."/>
            <person name="Shimokawa K."/>
            <person name="Bajic V.B."/>
            <person name="Brenner S.E."/>
            <person name="Batalov S."/>
            <person name="Forrest A.R."/>
            <person name="Zavolan M."/>
            <person name="Davis M.J."/>
            <person name="Wilming L.G."/>
            <person name="Aidinis V."/>
            <person name="Allen J.E."/>
            <person name="Ambesi-Impiombato A."/>
            <person name="Apweiler R."/>
            <person name="Aturaliya R.N."/>
            <person name="Bailey T.L."/>
            <person name="Bansal M."/>
            <person name="Baxter L."/>
            <person name="Beisel K.W."/>
            <person name="Bersano T."/>
            <person name="Bono H."/>
            <person name="Chalk A.M."/>
            <person name="Chiu K.P."/>
            <person name="Choudhary V."/>
            <person name="Christoffels A."/>
            <person name="Clutterbuck D.R."/>
            <person name="Crowe M.L."/>
            <person name="Dalla E."/>
            <person name="Dalrymple B.P."/>
            <person name="de Bono B."/>
            <person name="Della Gatta G."/>
            <person name="di Bernardo D."/>
            <person name="Down T."/>
            <person name="Engstrom P."/>
            <person name="Fagiolini M."/>
            <person name="Faulkner G."/>
            <person name="Fletcher C.F."/>
            <person name="Fukushima T."/>
            <person name="Furuno M."/>
            <person name="Futaki S."/>
            <person name="Gariboldi M."/>
            <person name="Georgii-Hemming P."/>
            <person name="Gingeras T.R."/>
            <person name="Gojobori T."/>
            <person name="Green R.E."/>
            <person name="Gustincich S."/>
            <person name="Harbers M."/>
            <person name="Hayashi Y."/>
            <person name="Hensch T.K."/>
            <person name="Hirokawa N."/>
            <person name="Hill D."/>
            <person name="Huminiecki L."/>
            <person name="Iacono M."/>
            <person name="Ikeo K."/>
            <person name="Iwama A."/>
            <person name="Ishikawa T."/>
            <person name="Jakt M."/>
            <person name="Kanapin A."/>
            <person name="Katoh M."/>
            <person name="Kawasawa Y."/>
            <person name="Kelso J."/>
            <person name="Kitamura H."/>
            <person name="Kitano H."/>
            <person name="Kollias G."/>
            <person name="Krishnan S.P."/>
            <person name="Kruger A."/>
            <person name="Kummerfeld S.K."/>
            <person name="Kurochkin I.V."/>
            <person name="Lareau L.F."/>
            <person name="Lazarevic D."/>
            <person name="Lipovich L."/>
            <person name="Liu J."/>
            <person name="Liuni S."/>
            <person name="McWilliam S."/>
            <person name="Madan Babu M."/>
            <person name="Madera M."/>
            <person name="Marchionni L."/>
            <person name="Matsuda H."/>
            <person name="Matsuzawa S."/>
            <person name="Miki H."/>
            <person name="Mignone F."/>
            <person name="Miyake S."/>
            <person name="Morris K."/>
            <person name="Mottagui-Tabar S."/>
            <person name="Mulder N."/>
            <person name="Nakano N."/>
            <person name="Nakauchi H."/>
            <person name="Ng P."/>
            <person name="Nilsson R."/>
            <person name="Nishiguchi S."/>
            <person name="Nishikawa S."/>
            <person name="Nori F."/>
            <person name="Ohara O."/>
            <person name="Okazaki Y."/>
            <person name="Orlando V."/>
            <person name="Pang K.C."/>
            <person name="Pavan W.J."/>
            <person name="Pavesi G."/>
            <person name="Pesole G."/>
            <person name="Petrovsky N."/>
            <person name="Piazza S."/>
            <person name="Reed J."/>
            <person name="Reid J.F."/>
            <person name="Ring B.Z."/>
            <person name="Ringwald M."/>
            <person name="Rost B."/>
            <person name="Ruan Y."/>
            <person name="Salzberg S.L."/>
            <person name="Sandelin A."/>
            <person name="Schneider C."/>
            <person name="Schoenbach C."/>
            <person name="Sekiguchi K."/>
            <person name="Semple C.A."/>
            <person name="Seno S."/>
            <person name="Sessa L."/>
            <person name="Sheng Y."/>
            <person name="Shibata Y."/>
            <person name="Shimada H."/>
            <person name="Shimada K."/>
            <person name="Silva D."/>
            <person name="Sinclair B."/>
            <person name="Sperling S."/>
            <person name="Stupka E."/>
            <person name="Sugiura K."/>
            <person name="Sultana R."/>
            <person name="Takenaka Y."/>
            <person name="Taki K."/>
            <person name="Tammoja K."/>
            <person name="Tan S.L."/>
            <person name="Tang S."/>
            <person name="Taylor M.S."/>
            <person name="Tegner J."/>
            <person name="Teichmann S.A."/>
            <person name="Ueda H.R."/>
            <person name="van Nimwegen E."/>
            <person name="Verardo R."/>
            <person name="Wei C.L."/>
            <person name="Yagi K."/>
            <person name="Yamanishi H."/>
            <person name="Zabarovsky E."/>
            <person name="Zhu S."/>
            <person name="Zimmer A."/>
            <person name="Hide W."/>
            <person name="Bult C."/>
            <person name="Grimmond S.M."/>
            <person name="Teasdale R.D."/>
            <person name="Liu E.T."/>
            <person name="Brusic V."/>
            <person name="Quackenbush J."/>
            <person name="Wahlestedt C."/>
            <person name="Mattick J.S."/>
            <person name="Hume D.A."/>
            <person name="Kai C."/>
            <person name="Sasaki D."/>
            <person name="Tomaru Y."/>
            <person name="Fukuda S."/>
            <person name="Kanamori-Katayama M."/>
            <person name="Suzuki M."/>
            <person name="Aoki J."/>
            <person name="Arakawa T."/>
            <person name="Iida J."/>
            <person name="Imamura K."/>
            <person name="Itoh M."/>
            <person name="Kato T."/>
            <person name="Kawaji H."/>
            <person name="Kawagashira N."/>
            <person name="Kawashima T."/>
            <person name="Kojima M."/>
            <person name="Kondo S."/>
            <person name="Konno H."/>
            <person name="Nakano K."/>
            <person name="Ninomiya N."/>
            <person name="Nishio T."/>
            <person name="Okada M."/>
            <person name="Plessy C."/>
            <person name="Shibata K."/>
            <person name="Shiraki T."/>
            <person name="Suzuki S."/>
            <person name="Tagami M."/>
            <person name="Waki K."/>
            <person name="Watahiki A."/>
            <person name="Okamura-Oho Y."/>
            <person name="Suzuki H."/>
            <person name="Kawai J."/>
            <person name="Hayashizaki Y."/>
        </authorList>
    </citation>
    <scope>NUCLEOTIDE SEQUENCE [LARGE SCALE MRNA]</scope>
    <source>
        <strain>NOD</strain>
    </source>
</reference>
<reference key="2">
    <citation type="journal article" date="2010" name="Cell">
        <title>A tissue-specific atlas of mouse protein phosphorylation and expression.</title>
        <authorList>
            <person name="Huttlin E.L."/>
            <person name="Jedrychowski M.P."/>
            <person name="Elias J.E."/>
            <person name="Goswami T."/>
            <person name="Rad R."/>
            <person name="Beausoleil S.A."/>
            <person name="Villen J."/>
            <person name="Haas W."/>
            <person name="Sowa M.E."/>
            <person name="Gygi S.P."/>
        </authorList>
    </citation>
    <scope>IDENTIFICATION BY MASS SPECTROMETRY [LARGE SCALE ANALYSIS]</scope>
    <source>
        <tissue>Testis</tissue>
    </source>
</reference>
<reference key="3">
    <citation type="journal article" date="2022" name="Dev. Biol.">
        <title>IRGC1, a testis-enriched immunity related GTPase, is important for fibrous sheath integrity and sperm motility in mice.</title>
        <authorList>
            <person name="Kaneda Y."/>
            <person name="Miyata H."/>
            <person name="Shimada K."/>
            <person name="Oyama Y."/>
            <person name="Iida-Norita R."/>
            <person name="Ikawa M."/>
        </authorList>
    </citation>
    <scope>FUNCTION</scope>
    <scope>TISSUE SPECIFICITY</scope>
    <scope>DEVELOPMENTAL STAGE</scope>
    <scope>DISRUPTION PHENOTYPE</scope>
</reference>
<reference key="4">
    <citation type="journal article" date="2023" name="FEBS Lett.">
        <title>The immunity-related GTPase IRGC mediates interaction between lipid droplets and mitochondria to facilitate sperm motility.</title>
        <authorList>
            <person name="Li J."/>
            <person name="Xu X."/>
            <person name="Liu J."/>
            <person name="Zhang S."/>
            <person name="Wang T."/>
            <person name="Liu Y."/>
            <person name="Wang Z."/>
        </authorList>
    </citation>
    <scope>INTERACTION WITH PLIN2 AND COX4I1</scope>
    <scope>SUBCELLULAR LOCATION</scope>
    <scope>TISSUE SPECIFICITY</scope>
    <scope>DEVELOPMENTAL STAGE</scope>
</reference>
<feature type="chain" id="PRO_0000285266" description="Interferon-inducible GTPase 5">
    <location>
        <begin position="1"/>
        <end position="412"/>
    </location>
</feature>
<feature type="domain" description="IRG-type G" evidence="3">
    <location>
        <begin position="51"/>
        <end position="234"/>
    </location>
</feature>
<feature type="binding site" evidence="1">
    <location>
        <begin position="60"/>
        <end position="67"/>
    </location>
    <ligand>
        <name>GTP</name>
        <dbReference type="ChEBI" id="CHEBI:37565"/>
    </ligand>
</feature>
<feature type="binding site" evidence="1">
    <location>
        <begin position="85"/>
        <end position="89"/>
    </location>
    <ligand>
        <name>GTP</name>
        <dbReference type="ChEBI" id="CHEBI:37565"/>
    </ligand>
</feature>
<feature type="binding site" evidence="1">
    <location>
        <begin position="215"/>
        <end position="217"/>
    </location>
    <ligand>
        <name>GTP</name>
        <dbReference type="ChEBI" id="CHEBI:37565"/>
    </ligand>
</feature>
<feature type="modified residue" description="Phosphoserine" evidence="2">
    <location>
        <position position="246"/>
    </location>
</feature>
<feature type="modified residue" description="Phosphoserine" evidence="2">
    <location>
        <position position="303"/>
    </location>
</feature>
<gene>
    <name evidence="8" type="primary">Irgc</name>
    <name type="synonym">Gm1102</name>
    <name type="synonym">Iigp5</name>
    <name evidence="6" type="synonym">Irgc1</name>
</gene>
<proteinExistence type="evidence at protein level"/>
<dbReference type="EC" id="3.6.5.-"/>
<dbReference type="EMBL" id="AK089224">
    <property type="protein sequence ID" value="BAC40799.1"/>
    <property type="molecule type" value="mRNA"/>
</dbReference>
<dbReference type="SMR" id="Q8C262"/>
<dbReference type="FunCoup" id="Q8C262">
    <property type="interactions" value="10"/>
</dbReference>
<dbReference type="iPTMnet" id="Q8C262"/>
<dbReference type="PhosphoSitePlus" id="Q8C262"/>
<dbReference type="REPRODUCTION-2DPAGE" id="IPI00224512"/>
<dbReference type="ProteomicsDB" id="266961"/>
<dbReference type="AGR" id="MGI:2685948"/>
<dbReference type="MGI" id="MGI:2685948">
    <property type="gene designation" value="Irgc"/>
</dbReference>
<dbReference type="InParanoid" id="Q8C262"/>
<dbReference type="ChiTaRS" id="Irgc1">
    <property type="organism name" value="mouse"/>
</dbReference>
<dbReference type="PRO" id="PR:Q8C262"/>
<dbReference type="Proteomes" id="UP000000589">
    <property type="component" value="Unplaced"/>
</dbReference>
<dbReference type="RNAct" id="Q8C262">
    <property type="molecule type" value="protein"/>
</dbReference>
<dbReference type="GO" id="GO:0005811">
    <property type="term" value="C:lipid droplet"/>
    <property type="evidence" value="ECO:0000314"/>
    <property type="project" value="UniProtKB"/>
</dbReference>
<dbReference type="GO" id="GO:0016020">
    <property type="term" value="C:membrane"/>
    <property type="evidence" value="ECO:0007669"/>
    <property type="project" value="InterPro"/>
</dbReference>
<dbReference type="GO" id="GO:0036126">
    <property type="term" value="C:sperm flagellum"/>
    <property type="evidence" value="ECO:0000314"/>
    <property type="project" value="UniProtKB"/>
</dbReference>
<dbReference type="GO" id="GO:0097226">
    <property type="term" value="C:sperm mitochondrial sheath"/>
    <property type="evidence" value="ECO:0000314"/>
    <property type="project" value="UniProtKB"/>
</dbReference>
<dbReference type="GO" id="GO:0005525">
    <property type="term" value="F:GTP binding"/>
    <property type="evidence" value="ECO:0007669"/>
    <property type="project" value="UniProtKB-KW"/>
</dbReference>
<dbReference type="GO" id="GO:0003924">
    <property type="term" value="F:GTPase activity"/>
    <property type="evidence" value="ECO:0007669"/>
    <property type="project" value="RHEA"/>
</dbReference>
<dbReference type="GO" id="GO:1902093">
    <property type="term" value="P:positive regulation of flagellated sperm motility"/>
    <property type="evidence" value="ECO:0000315"/>
    <property type="project" value="UniProtKB"/>
</dbReference>
<dbReference type="FunFam" id="3.40.50.300:FF:000541">
    <property type="entry name" value="Immunity related GTPase M"/>
    <property type="match status" value="1"/>
</dbReference>
<dbReference type="Gene3D" id="3.40.50.300">
    <property type="entry name" value="P-loop containing nucleotide triphosphate hydrolases"/>
    <property type="match status" value="1"/>
</dbReference>
<dbReference type="InterPro" id="IPR030385">
    <property type="entry name" value="G_IRG_dom"/>
</dbReference>
<dbReference type="InterPro" id="IPR007743">
    <property type="entry name" value="Immunity-related_GTPase-like"/>
</dbReference>
<dbReference type="InterPro" id="IPR051515">
    <property type="entry name" value="IRG"/>
</dbReference>
<dbReference type="InterPro" id="IPR027417">
    <property type="entry name" value="P-loop_NTPase"/>
</dbReference>
<dbReference type="PANTHER" id="PTHR32341">
    <property type="entry name" value="INTERFERON-INDUCIBLE GTPASE"/>
    <property type="match status" value="1"/>
</dbReference>
<dbReference type="PANTHER" id="PTHR32341:SF10">
    <property type="entry name" value="INTERFERON-INDUCIBLE GTPASE 5"/>
    <property type="match status" value="1"/>
</dbReference>
<dbReference type="Pfam" id="PF05049">
    <property type="entry name" value="IIGP"/>
    <property type="match status" value="1"/>
</dbReference>
<dbReference type="SUPFAM" id="SSF52540">
    <property type="entry name" value="P-loop containing nucleoside triphosphate hydrolases"/>
    <property type="match status" value="1"/>
</dbReference>
<dbReference type="PROSITE" id="PS51716">
    <property type="entry name" value="G_IRG"/>
    <property type="match status" value="1"/>
</dbReference>